<gene>
    <name evidence="1" type="primary">kup</name>
    <name type="ordered locus">LSEI_2333</name>
</gene>
<comment type="function">
    <text evidence="1">Transport of potassium into the cell. Likely operates as a K(+):H(+) symporter.</text>
</comment>
<comment type="catalytic activity">
    <reaction evidence="1">
        <text>K(+)(in) + H(+)(in) = K(+)(out) + H(+)(out)</text>
        <dbReference type="Rhea" id="RHEA:28490"/>
        <dbReference type="ChEBI" id="CHEBI:15378"/>
        <dbReference type="ChEBI" id="CHEBI:29103"/>
    </reaction>
    <physiologicalReaction direction="right-to-left" evidence="1">
        <dbReference type="Rhea" id="RHEA:28492"/>
    </physiologicalReaction>
</comment>
<comment type="subcellular location">
    <subcellularLocation>
        <location evidence="1">Cell membrane</location>
        <topology evidence="1">Multi-pass membrane protein</topology>
    </subcellularLocation>
</comment>
<comment type="similarity">
    <text evidence="1">Belongs to the HAK/KUP transporter (TC 2.A.72) family.</text>
</comment>
<dbReference type="EMBL" id="CP000423">
    <property type="protein sequence ID" value="ABJ71077.1"/>
    <property type="molecule type" value="Genomic_DNA"/>
</dbReference>
<dbReference type="RefSeq" id="WP_003595985.1">
    <property type="nucleotide sequence ID" value="NC_008526.1"/>
</dbReference>
<dbReference type="RefSeq" id="YP_807519.1">
    <property type="nucleotide sequence ID" value="NC_008526.1"/>
</dbReference>
<dbReference type="STRING" id="321967.LSEI_2333"/>
<dbReference type="PaxDb" id="321967-LSEI_2333"/>
<dbReference type="KEGG" id="lca:LSEI_2333"/>
<dbReference type="PATRIC" id="fig|321967.11.peg.2294"/>
<dbReference type="HOGENOM" id="CLU_008142_4_1_9"/>
<dbReference type="Proteomes" id="UP000001651">
    <property type="component" value="Chromosome"/>
</dbReference>
<dbReference type="GO" id="GO:0005886">
    <property type="term" value="C:plasma membrane"/>
    <property type="evidence" value="ECO:0007669"/>
    <property type="project" value="UniProtKB-SubCell"/>
</dbReference>
<dbReference type="GO" id="GO:0015079">
    <property type="term" value="F:potassium ion transmembrane transporter activity"/>
    <property type="evidence" value="ECO:0007669"/>
    <property type="project" value="UniProtKB-UniRule"/>
</dbReference>
<dbReference type="GO" id="GO:0015293">
    <property type="term" value="F:symporter activity"/>
    <property type="evidence" value="ECO:0007669"/>
    <property type="project" value="UniProtKB-UniRule"/>
</dbReference>
<dbReference type="HAMAP" id="MF_01522">
    <property type="entry name" value="Kup"/>
    <property type="match status" value="1"/>
</dbReference>
<dbReference type="InterPro" id="IPR003855">
    <property type="entry name" value="K+_transporter"/>
</dbReference>
<dbReference type="InterPro" id="IPR053952">
    <property type="entry name" value="K_trans_C"/>
</dbReference>
<dbReference type="InterPro" id="IPR053951">
    <property type="entry name" value="K_trans_N"/>
</dbReference>
<dbReference type="InterPro" id="IPR023051">
    <property type="entry name" value="Kup"/>
</dbReference>
<dbReference type="PANTHER" id="PTHR30540:SF83">
    <property type="entry name" value="K+ POTASSIUM TRANSPORTER"/>
    <property type="match status" value="1"/>
</dbReference>
<dbReference type="PANTHER" id="PTHR30540">
    <property type="entry name" value="OSMOTIC STRESS POTASSIUM TRANSPORTER"/>
    <property type="match status" value="1"/>
</dbReference>
<dbReference type="Pfam" id="PF02705">
    <property type="entry name" value="K_trans"/>
    <property type="match status" value="1"/>
</dbReference>
<dbReference type="Pfam" id="PF22776">
    <property type="entry name" value="K_trans_C"/>
    <property type="match status" value="1"/>
</dbReference>
<accession>Q035P5</accession>
<protein>
    <recommendedName>
        <fullName evidence="1">Probable potassium transport system protein Kup</fullName>
    </recommendedName>
</protein>
<reference key="1">
    <citation type="journal article" date="2006" name="Proc. Natl. Acad. Sci. U.S.A.">
        <title>Comparative genomics of the lactic acid bacteria.</title>
        <authorList>
            <person name="Makarova K.S."/>
            <person name="Slesarev A."/>
            <person name="Wolf Y.I."/>
            <person name="Sorokin A."/>
            <person name="Mirkin B."/>
            <person name="Koonin E.V."/>
            <person name="Pavlov A."/>
            <person name="Pavlova N."/>
            <person name="Karamychev V."/>
            <person name="Polouchine N."/>
            <person name="Shakhova V."/>
            <person name="Grigoriev I."/>
            <person name="Lou Y."/>
            <person name="Rohksar D."/>
            <person name="Lucas S."/>
            <person name="Huang K."/>
            <person name="Goodstein D.M."/>
            <person name="Hawkins T."/>
            <person name="Plengvidhya V."/>
            <person name="Welker D."/>
            <person name="Hughes J."/>
            <person name="Goh Y."/>
            <person name="Benson A."/>
            <person name="Baldwin K."/>
            <person name="Lee J.-H."/>
            <person name="Diaz-Muniz I."/>
            <person name="Dosti B."/>
            <person name="Smeianov V."/>
            <person name="Wechter W."/>
            <person name="Barabote R."/>
            <person name="Lorca G."/>
            <person name="Altermann E."/>
            <person name="Barrangou R."/>
            <person name="Ganesan B."/>
            <person name="Xie Y."/>
            <person name="Rawsthorne H."/>
            <person name="Tamir D."/>
            <person name="Parker C."/>
            <person name="Breidt F."/>
            <person name="Broadbent J.R."/>
            <person name="Hutkins R."/>
            <person name="O'Sullivan D."/>
            <person name="Steele J."/>
            <person name="Unlu G."/>
            <person name="Saier M.H. Jr."/>
            <person name="Klaenhammer T."/>
            <person name="Richardson P."/>
            <person name="Kozyavkin S."/>
            <person name="Weimer B.C."/>
            <person name="Mills D.A."/>
        </authorList>
    </citation>
    <scope>NUCLEOTIDE SEQUENCE [LARGE SCALE GENOMIC DNA]</scope>
    <source>
        <strain>ATCC 334 / BCRC 17002 / CCUG 31169 / CIP 107868 / KCTC 3260 / NRRL B-441</strain>
    </source>
</reference>
<organism>
    <name type="scientific">Lacticaseibacillus paracasei (strain ATCC 334 / BCRC 17002 / CCUG 31169 / CIP 107868 / KCTC 3260 / NRRL B-441)</name>
    <name type="common">Lactobacillus paracasei</name>
    <dbReference type="NCBI Taxonomy" id="321967"/>
    <lineage>
        <taxon>Bacteria</taxon>
        <taxon>Bacillati</taxon>
        <taxon>Bacillota</taxon>
        <taxon>Bacilli</taxon>
        <taxon>Lactobacillales</taxon>
        <taxon>Lactobacillaceae</taxon>
        <taxon>Lacticaseibacillus</taxon>
    </lineage>
</organism>
<sequence>MASGLTANKKLRHKITAAALLVTLGVVYGDIGTSPLYVMKSIVAGNGGMGHFDTDFLVGSVSLIFWTLLIITTVKYVLIALRADNNGEGGIFALYTLVRQRARWLVLPAMVGGAALLADGMLTPAVTVTTAIEGLKGVHINGNILIDNQQQVIWVTVLIITFLFFIQRFGTDLIGKAFGPIMFVWFTFLGVAGFIALSKDWSMLRALNPYYALHLLVSPDNKMGLFILGSIFLATTGAEALYSDMGHVGRGNIYLSWPYVNICLVLNYFGQAVWLDQNSKVTAFNKITDFNPFFQMLPESIRLGAIILATLAAIIASQALISGSYTLVSEAIKLRFLPRLHIIYPTRLKGQLYIPVVNTILWLACLAIIGYFKTSAEMEGAYGLAITITMLMTTLLLYQYLRSRHAPAVVAIGTLIFFSAIETVFFISSAVKFLHGGYVTAMIAFIILAVMYVWQYGGRIRDDNTYRAEMASLFAYKNQLSELRNDPDYPTYTTNLVYMTQIANDHYIKKEILYSILDKRPKRARVYWFVTVNVTDEPYTAEYTTDTYGTDYMVNVQLYLGFRMEQQVNVFLRQIVNDMMREGELPTQPQKYTTIPDRQVGDWTFVLLHEELSPQTQIKGFQKAIIQARLRLQHIAVSPAQWFGLEYADTIDETVPLVLGKIPITKLNRLTRSQAEAQPEDEDD</sequence>
<evidence type="ECO:0000255" key="1">
    <source>
        <dbReference type="HAMAP-Rule" id="MF_01522"/>
    </source>
</evidence>
<proteinExistence type="inferred from homology"/>
<feature type="chain" id="PRO_0000279790" description="Probable potassium transport system protein Kup">
    <location>
        <begin position="1"/>
        <end position="684"/>
    </location>
</feature>
<feature type="transmembrane region" description="Helical" evidence="1">
    <location>
        <begin position="19"/>
        <end position="39"/>
    </location>
</feature>
<feature type="transmembrane region" description="Helical" evidence="1">
    <location>
        <begin position="61"/>
        <end position="81"/>
    </location>
</feature>
<feature type="transmembrane region" description="Helical" evidence="1">
    <location>
        <begin position="104"/>
        <end position="124"/>
    </location>
</feature>
<feature type="transmembrane region" description="Helical" evidence="1">
    <location>
        <begin position="151"/>
        <end position="171"/>
    </location>
</feature>
<feature type="transmembrane region" description="Helical" evidence="1">
    <location>
        <begin position="177"/>
        <end position="197"/>
    </location>
</feature>
<feature type="transmembrane region" description="Helical" evidence="1">
    <location>
        <begin position="223"/>
        <end position="243"/>
    </location>
</feature>
<feature type="transmembrane region" description="Helical" evidence="1">
    <location>
        <begin position="255"/>
        <end position="275"/>
    </location>
</feature>
<feature type="transmembrane region" description="Helical" evidence="1">
    <location>
        <begin position="303"/>
        <end position="323"/>
    </location>
</feature>
<feature type="transmembrane region" description="Helical" evidence="1">
    <location>
        <begin position="352"/>
        <end position="372"/>
    </location>
</feature>
<feature type="transmembrane region" description="Helical" evidence="1">
    <location>
        <begin position="381"/>
        <end position="401"/>
    </location>
</feature>
<feature type="transmembrane region" description="Helical" evidence="1">
    <location>
        <begin position="407"/>
        <end position="427"/>
    </location>
</feature>
<feature type="transmembrane region" description="Helical" evidence="1">
    <location>
        <begin position="433"/>
        <end position="453"/>
    </location>
</feature>
<keyword id="KW-1003">Cell membrane</keyword>
<keyword id="KW-0406">Ion transport</keyword>
<keyword id="KW-0472">Membrane</keyword>
<keyword id="KW-0630">Potassium</keyword>
<keyword id="KW-0633">Potassium transport</keyword>
<keyword id="KW-1185">Reference proteome</keyword>
<keyword id="KW-0769">Symport</keyword>
<keyword id="KW-0812">Transmembrane</keyword>
<keyword id="KW-1133">Transmembrane helix</keyword>
<keyword id="KW-0813">Transport</keyword>
<name>KUP_LACP3</name>